<dbReference type="EC" id="4.1.1.98" evidence="1"/>
<dbReference type="EMBL" id="CP000270">
    <property type="protein sequence ID" value="ABE32057.1"/>
    <property type="molecule type" value="Genomic_DNA"/>
</dbReference>
<dbReference type="RefSeq" id="WP_011489564.1">
    <property type="nucleotide sequence ID" value="NC_007951.1"/>
</dbReference>
<dbReference type="SMR" id="Q13V32"/>
<dbReference type="STRING" id="266265.Bxe_A0888"/>
<dbReference type="KEGG" id="bxb:DR64_3049"/>
<dbReference type="KEGG" id="bxe:Bxe_A0888"/>
<dbReference type="PATRIC" id="fig|266265.5.peg.3697"/>
<dbReference type="eggNOG" id="COG0043">
    <property type="taxonomic scope" value="Bacteria"/>
</dbReference>
<dbReference type="OrthoDB" id="9809841at2"/>
<dbReference type="UniPathway" id="UPA00232"/>
<dbReference type="Proteomes" id="UP000001817">
    <property type="component" value="Chromosome 1"/>
</dbReference>
<dbReference type="GO" id="GO:0005829">
    <property type="term" value="C:cytosol"/>
    <property type="evidence" value="ECO:0007669"/>
    <property type="project" value="TreeGrafter"/>
</dbReference>
<dbReference type="GO" id="GO:0005886">
    <property type="term" value="C:plasma membrane"/>
    <property type="evidence" value="ECO:0007669"/>
    <property type="project" value="UniProtKB-SubCell"/>
</dbReference>
<dbReference type="GO" id="GO:0008694">
    <property type="term" value="F:3-octaprenyl-4-hydroxybenzoate carboxy-lyase activity"/>
    <property type="evidence" value="ECO:0007669"/>
    <property type="project" value="UniProtKB-UniRule"/>
</dbReference>
<dbReference type="GO" id="GO:0046872">
    <property type="term" value="F:metal ion binding"/>
    <property type="evidence" value="ECO:0007669"/>
    <property type="project" value="UniProtKB-KW"/>
</dbReference>
<dbReference type="GO" id="GO:0006744">
    <property type="term" value="P:ubiquinone biosynthetic process"/>
    <property type="evidence" value="ECO:0007669"/>
    <property type="project" value="UniProtKB-UniRule"/>
</dbReference>
<dbReference type="FunFam" id="1.20.5.570:FF:000001">
    <property type="entry name" value="3-octaprenyl-4-hydroxybenzoate carboxy-lyase"/>
    <property type="match status" value="1"/>
</dbReference>
<dbReference type="FunFam" id="3.40.1670.10:FF:000001">
    <property type="entry name" value="3-octaprenyl-4-hydroxybenzoate carboxy-lyase"/>
    <property type="match status" value="1"/>
</dbReference>
<dbReference type="Gene3D" id="1.20.5.570">
    <property type="entry name" value="Single helix bin"/>
    <property type="match status" value="1"/>
</dbReference>
<dbReference type="Gene3D" id="3.40.1670.10">
    <property type="entry name" value="UbiD C-terminal domain-like"/>
    <property type="match status" value="1"/>
</dbReference>
<dbReference type="HAMAP" id="MF_01636">
    <property type="entry name" value="UbiD"/>
    <property type="match status" value="1"/>
</dbReference>
<dbReference type="InterPro" id="IPR002830">
    <property type="entry name" value="UbiD"/>
</dbReference>
<dbReference type="InterPro" id="IPR049381">
    <property type="entry name" value="UbiD-like_C"/>
</dbReference>
<dbReference type="InterPro" id="IPR049383">
    <property type="entry name" value="UbiD-like_N"/>
</dbReference>
<dbReference type="InterPro" id="IPR023677">
    <property type="entry name" value="UbiD_bacteria"/>
</dbReference>
<dbReference type="InterPro" id="IPR048304">
    <property type="entry name" value="UbiD_Rift_dom"/>
</dbReference>
<dbReference type="NCBIfam" id="TIGR00148">
    <property type="entry name" value="UbiD family decarboxylase"/>
    <property type="match status" value="2"/>
</dbReference>
<dbReference type="PANTHER" id="PTHR30108">
    <property type="entry name" value="3-OCTAPRENYL-4-HYDROXYBENZOATE CARBOXY-LYASE-RELATED"/>
    <property type="match status" value="1"/>
</dbReference>
<dbReference type="PANTHER" id="PTHR30108:SF17">
    <property type="entry name" value="FERULIC ACID DECARBOXYLASE 1"/>
    <property type="match status" value="1"/>
</dbReference>
<dbReference type="Pfam" id="PF01977">
    <property type="entry name" value="UbiD"/>
    <property type="match status" value="1"/>
</dbReference>
<dbReference type="Pfam" id="PF20696">
    <property type="entry name" value="UbiD_C"/>
    <property type="match status" value="1"/>
</dbReference>
<dbReference type="Pfam" id="PF20695">
    <property type="entry name" value="UbiD_N"/>
    <property type="match status" value="1"/>
</dbReference>
<dbReference type="SUPFAM" id="SSF50475">
    <property type="entry name" value="FMN-binding split barrel"/>
    <property type="match status" value="1"/>
</dbReference>
<dbReference type="SUPFAM" id="SSF143968">
    <property type="entry name" value="UbiD C-terminal domain-like"/>
    <property type="match status" value="1"/>
</dbReference>
<name>UBID_PARXL</name>
<reference key="1">
    <citation type="journal article" date="2006" name="Proc. Natl. Acad. Sci. U.S.A.">
        <title>Burkholderia xenovorans LB400 harbors a multi-replicon, 9.73-Mbp genome shaped for versatility.</title>
        <authorList>
            <person name="Chain P.S.G."/>
            <person name="Denef V.J."/>
            <person name="Konstantinidis K.T."/>
            <person name="Vergez L.M."/>
            <person name="Agullo L."/>
            <person name="Reyes V.L."/>
            <person name="Hauser L."/>
            <person name="Cordova M."/>
            <person name="Gomez L."/>
            <person name="Gonzalez M."/>
            <person name="Land M."/>
            <person name="Lao V."/>
            <person name="Larimer F."/>
            <person name="LiPuma J.J."/>
            <person name="Mahenthiralingam E."/>
            <person name="Malfatti S.A."/>
            <person name="Marx C.J."/>
            <person name="Parnell J.J."/>
            <person name="Ramette A."/>
            <person name="Richardson P."/>
            <person name="Seeger M."/>
            <person name="Smith D."/>
            <person name="Spilker T."/>
            <person name="Sul W.J."/>
            <person name="Tsoi T.V."/>
            <person name="Ulrich L.E."/>
            <person name="Zhulin I.B."/>
            <person name="Tiedje J.M."/>
        </authorList>
    </citation>
    <scope>NUCLEOTIDE SEQUENCE [LARGE SCALE GENOMIC DNA]</scope>
    <source>
        <strain>LB400</strain>
    </source>
</reference>
<organism>
    <name type="scientific">Paraburkholderia xenovorans (strain LB400)</name>
    <dbReference type="NCBI Taxonomy" id="266265"/>
    <lineage>
        <taxon>Bacteria</taxon>
        <taxon>Pseudomonadati</taxon>
        <taxon>Pseudomonadota</taxon>
        <taxon>Betaproteobacteria</taxon>
        <taxon>Burkholderiales</taxon>
        <taxon>Burkholderiaceae</taxon>
        <taxon>Paraburkholderia</taxon>
    </lineage>
</organism>
<accession>Q13V32</accession>
<feature type="chain" id="PRO_0000267658" description="3-octaprenyl-4-hydroxybenzoate carboxy-lyase">
    <location>
        <begin position="1"/>
        <end position="522"/>
    </location>
</feature>
<feature type="active site" description="Proton donor" evidence="1">
    <location>
        <position position="322"/>
    </location>
</feature>
<feature type="binding site" evidence="1">
    <location>
        <position position="181"/>
    </location>
    <ligand>
        <name>Mn(2+)</name>
        <dbReference type="ChEBI" id="CHEBI:29035"/>
    </ligand>
</feature>
<feature type="binding site" evidence="1">
    <location>
        <begin position="184"/>
        <end position="186"/>
    </location>
    <ligand>
        <name>prenylated FMN</name>
        <dbReference type="ChEBI" id="CHEBI:87746"/>
    </ligand>
</feature>
<feature type="binding site" evidence="1">
    <location>
        <begin position="198"/>
        <end position="200"/>
    </location>
    <ligand>
        <name>prenylated FMN</name>
        <dbReference type="ChEBI" id="CHEBI:87746"/>
    </ligand>
</feature>
<feature type="binding site" evidence="1">
    <location>
        <begin position="203"/>
        <end position="204"/>
    </location>
    <ligand>
        <name>prenylated FMN</name>
        <dbReference type="ChEBI" id="CHEBI:87746"/>
    </ligand>
</feature>
<feature type="binding site" evidence="1">
    <location>
        <position position="247"/>
    </location>
    <ligand>
        <name>Mn(2+)</name>
        <dbReference type="ChEBI" id="CHEBI:29035"/>
    </ligand>
</feature>
<evidence type="ECO:0000255" key="1">
    <source>
        <dbReference type="HAMAP-Rule" id="MF_01636"/>
    </source>
</evidence>
<protein>
    <recommendedName>
        <fullName evidence="1">3-octaprenyl-4-hydroxybenzoate carboxy-lyase</fullName>
        <ecNumber evidence="1">4.1.1.98</ecNumber>
    </recommendedName>
    <alternativeName>
        <fullName evidence="1">Polyprenyl p-hydroxybenzoate decarboxylase</fullName>
    </alternativeName>
</protein>
<comment type="function">
    <text evidence="1">Catalyzes the decarboxylation of 3-octaprenyl-4-hydroxy benzoate to 2-octaprenylphenol, an intermediate step in ubiquinone biosynthesis.</text>
</comment>
<comment type="catalytic activity">
    <reaction evidence="1">
        <text>a 4-hydroxy-3-(all-trans-polyprenyl)benzoate + H(+) = a 2-(all-trans-polyprenyl)phenol + CO2</text>
        <dbReference type="Rhea" id="RHEA:41680"/>
        <dbReference type="Rhea" id="RHEA-COMP:9514"/>
        <dbReference type="Rhea" id="RHEA-COMP:9516"/>
        <dbReference type="ChEBI" id="CHEBI:1269"/>
        <dbReference type="ChEBI" id="CHEBI:15378"/>
        <dbReference type="ChEBI" id="CHEBI:16526"/>
        <dbReference type="ChEBI" id="CHEBI:78396"/>
        <dbReference type="EC" id="4.1.1.98"/>
    </reaction>
</comment>
<comment type="cofactor">
    <cofactor evidence="1">
        <name>prenylated FMN</name>
        <dbReference type="ChEBI" id="CHEBI:87746"/>
    </cofactor>
    <text evidence="1">Binds 1 prenylated FMN per subunit.</text>
</comment>
<comment type="cofactor">
    <cofactor evidence="1">
        <name>Mn(2+)</name>
        <dbReference type="ChEBI" id="CHEBI:29035"/>
    </cofactor>
</comment>
<comment type="pathway">
    <text evidence="1">Cofactor biosynthesis; ubiquinone biosynthesis.</text>
</comment>
<comment type="subunit">
    <text evidence="1">Homohexamer.</text>
</comment>
<comment type="subcellular location">
    <subcellularLocation>
        <location evidence="1">Cell membrane</location>
        <topology evidence="1">Peripheral membrane protein</topology>
    </subcellularLocation>
</comment>
<comment type="similarity">
    <text evidence="1">Belongs to the UbiD family.</text>
</comment>
<sequence length="522" mass="57528">MKYKDLRDFVGRLETIGELRRISQTVSPVLEMTELCDRVLRAGGPALLFESKAQHAFPVLGNLFGTPRRVALGMGVDAQAGEGDGAALESLRDVGRLLSALKEPEPPKGLKDAGKLLSLAKAVWDMAPKTVSAPPCQEIVWEGNDVDLARLPIQTCWPGDAGPLITWGLTVTKGPNKPRQNLGIYRQQLIGRNKLIMRWLAHRGGALDFREFALQNPGKPYPVAVVLGADPATILGAVTPVPDTLSEYQFAGLLRGGRTELAKCLTPGVDGLQVPARAEIVLEGFIYPQEGAPSPAPAGAPPRPVKGASAAYEHALEGPYGDHTGYYNEQEWFPVFTVERITMRRDAIYHSTYTGKPPDEPAVLGVALNEVFVPLLQKQFTEITDFYLPPEGCSYRMAIVQMKKSYPGHAKRVMFGVWSFLRQFMYTKFIVVVDEDVNIRDWKEVIWAITTRIDPARDTVLVDRTPIDYLDFASPVAGLGSKMGLDATNKWPGETDREWGRPIVMDAAVKQRIDSLWNELGL</sequence>
<gene>
    <name evidence="1" type="primary">ubiD</name>
    <name type="ordered locus">Bxeno_A3519</name>
    <name type="ORF">Bxe_A0888</name>
</gene>
<keyword id="KW-1003">Cell membrane</keyword>
<keyword id="KW-0210">Decarboxylase</keyword>
<keyword id="KW-0285">Flavoprotein</keyword>
<keyword id="KW-0288">FMN</keyword>
<keyword id="KW-0456">Lyase</keyword>
<keyword id="KW-0464">Manganese</keyword>
<keyword id="KW-0472">Membrane</keyword>
<keyword id="KW-0479">Metal-binding</keyword>
<keyword id="KW-1185">Reference proteome</keyword>
<keyword id="KW-0831">Ubiquinone biosynthesis</keyword>
<proteinExistence type="inferred from homology"/>